<sequence>MVTCVPASEQIGCAERDSQIYSEDTGGTEAVRVTDCRSPEDSGPQNEPGYCNSEDSGQLMASYEGKARGYQVPPFGWRICLAHEFAEKRKPFQANNVSLSNLVKHFGMGLRYLKWWYRKTQVEKKTPFIDMFNSVPLRQIYGCPLGGIGGGTITRGWRGQFCRWQLNPGMYQHQTVIADQFIVCLRRDGRTVYQQVLSLELPSVLRSWNWGLCGYFAFYHALYPRAWTVYQLPGQNVTLTCRQITPILPHDYQDSSLPVGVFVWDVENEGDETLDVSIMFSMRNGLGGEDDAAGGLWNEPFRLEQDGTTVQGLLLHHPTPPNPYTMAVAARHTADTTVTYTTAFDPDSTGQQVWQDLLQDGQLDSPAGQSTPTQRGEGVAGAVCASSKLLPRGRCCLEFSLAWDMPRIMFGAKGQVHYRRYTRFFGSDGDVAPALSHYALCQYAGWENSISAWQNPVLDDRSLPAWYKSALFNELYFLADGGTVWLEVPEDSLPEELGGSMYQLRPILQDYGRFGYLEGQEYRMYNTYDVHFYASFALVMLWPKLELSLQYDMALATFKEDLTRRRYLMSGVVAPVKRRNVIPHDIGDPDDEPWLRVNAYLIHDTADWKDLNLKFVLQVYRDYYLTGDQGFLKDMWPVCLAVMESEMKFDKDQDGLIENGGYADQTYDGWVTTGPSAYCGGLWLAAVAVMVQMAVLCGAQDVQDKFSSILCRGREAYERLLWNGRYYNYDSSSQPQSRSVMSDQCAGQWFLRACGLGEGDTEVFPTLHVVRALKTIFELNVQAFAGGAMGAVNGMQPHGVPDRSSVQSDEVWVGVVYGLAATMIQEGLTWEGFRTAEGCYRTVWERLGLAFQTPEAYCQQRVFRSLAYMRPLSIWAMQLALQQQQHKKNSSRPAVTQGTAPSQPECGPKRSL</sequence>
<keyword id="KW-0025">Alternative splicing</keyword>
<keyword id="KW-0153">Cholesterol metabolism</keyword>
<keyword id="KW-0256">Endoplasmic reticulum</keyword>
<keyword id="KW-0326">Glycosidase</keyword>
<keyword id="KW-0328">Glycosyltransferase</keyword>
<keyword id="KW-0333">Golgi apparatus</keyword>
<keyword id="KW-0378">Hydrolase</keyword>
<keyword id="KW-0443">Lipid metabolism</keyword>
<keyword id="KW-0472">Membrane</keyword>
<keyword id="KW-1185">Reference proteome</keyword>
<keyword id="KW-0746">Sphingolipid metabolism</keyword>
<keyword id="KW-0753">Steroid metabolism</keyword>
<keyword id="KW-1207">Sterol metabolism</keyword>
<keyword id="KW-0808">Transferase</keyword>
<accession>Q5M868</accession>
<protein>
    <recommendedName>
        <fullName evidence="5">Non-lysosomal glucosylceramidase</fullName>
        <shortName evidence="2">NLGase</shortName>
        <ecNumber evidence="2">3.2.1.45</ecNumber>
    </recommendedName>
    <alternativeName>
        <fullName>Beta-glucocerebrosidase 2</fullName>
        <shortName>Beta-glucosidase 2</shortName>
    </alternativeName>
    <alternativeName>
        <fullName evidence="2">Bile acid beta-glucosidase GBA2</fullName>
    </alternativeName>
    <alternativeName>
        <fullName evidence="2">Bile acid glucosyl transferase GBA2</fullName>
    </alternativeName>
    <alternativeName>
        <fullName evidence="1">Cholesterol glucosyltransferase GBA2</fullName>
        <ecNumber evidence="1">2.4.1.-</ecNumber>
    </alternativeName>
    <alternativeName>
        <fullName evidence="1">Cholesteryl-beta-glucosidase GBA2</fullName>
        <ecNumber evidence="1">3.2.1.-</ecNumber>
    </alternativeName>
    <alternativeName>
        <fullName>Glucosylceramidase 2</fullName>
    </alternativeName>
    <alternativeName>
        <fullName evidence="5">Non-lysosomal cholesterol glycosyltransferase</fullName>
    </alternativeName>
    <alternativeName>
        <fullName evidence="5">Non-lysosomal galactosylceramidase</fullName>
        <ecNumber evidence="2">3.2.1.46</ecNumber>
    </alternativeName>
    <alternativeName>
        <fullName evidence="5">Non-lysosomal glycosylceramidase</fullName>
    </alternativeName>
</protein>
<name>GBA2_RAT</name>
<gene>
    <name evidence="6" type="primary">Gba2</name>
</gene>
<dbReference type="EC" id="3.2.1.45" evidence="2"/>
<dbReference type="EC" id="2.4.1.-" evidence="1"/>
<dbReference type="EC" id="3.2.1.-" evidence="1"/>
<dbReference type="EC" id="3.2.1.46" evidence="2"/>
<dbReference type="EMBL" id="AABR03040369">
    <property type="status" value="NOT_ANNOTATED_CDS"/>
    <property type="molecule type" value="Genomic_DNA"/>
</dbReference>
<dbReference type="EMBL" id="BC088200">
    <property type="protein sequence ID" value="AAH88200.1"/>
    <property type="molecule type" value="mRNA"/>
</dbReference>
<dbReference type="SMR" id="Q5M868"/>
<dbReference type="FunCoup" id="Q5M868">
    <property type="interactions" value="1871"/>
</dbReference>
<dbReference type="STRING" id="10116.ENSRNOP00000022002"/>
<dbReference type="CAZy" id="GH116">
    <property type="family name" value="Glycoside Hydrolase Family 116"/>
</dbReference>
<dbReference type="GlyGen" id="Q5M868">
    <property type="glycosylation" value="1 site"/>
</dbReference>
<dbReference type="PhosphoSitePlus" id="Q5M868"/>
<dbReference type="PaxDb" id="10116-ENSRNOP00000022002"/>
<dbReference type="UCSC" id="RGD:1305598">
    <molecule id="Q5M868-1"/>
    <property type="organism name" value="rat"/>
</dbReference>
<dbReference type="AGR" id="RGD:1305598"/>
<dbReference type="RGD" id="1305598">
    <property type="gene designation" value="Gba2"/>
</dbReference>
<dbReference type="eggNOG" id="KOG2119">
    <property type="taxonomic scope" value="Eukaryota"/>
</dbReference>
<dbReference type="InParanoid" id="Q5M868"/>
<dbReference type="PhylomeDB" id="Q5M868"/>
<dbReference type="TreeFam" id="TF313888"/>
<dbReference type="Reactome" id="R-RNO-9840310">
    <property type="pathway name" value="Glycosphingolipid catabolism"/>
</dbReference>
<dbReference type="UniPathway" id="UPA00222"/>
<dbReference type="UniPathway" id="UPA00296"/>
<dbReference type="PRO" id="PR:Q5M868"/>
<dbReference type="Proteomes" id="UP000002494">
    <property type="component" value="Chromosome 5"/>
</dbReference>
<dbReference type="Bgee" id="ENSRNOG00000016364">
    <property type="expression patterns" value="Expressed in cerebellum and 20 other cell types or tissues"/>
</dbReference>
<dbReference type="ExpressionAtlas" id="Q5M868">
    <property type="expression patterns" value="baseline and differential"/>
</dbReference>
<dbReference type="GO" id="GO:0005829">
    <property type="term" value="C:cytosol"/>
    <property type="evidence" value="ECO:0000250"/>
    <property type="project" value="UniProtKB"/>
</dbReference>
<dbReference type="GO" id="GO:0005789">
    <property type="term" value="C:endoplasmic reticulum membrane"/>
    <property type="evidence" value="ECO:0000250"/>
    <property type="project" value="UniProtKB"/>
</dbReference>
<dbReference type="GO" id="GO:0000139">
    <property type="term" value="C:Golgi membrane"/>
    <property type="evidence" value="ECO:0000250"/>
    <property type="project" value="UniProtKB"/>
</dbReference>
<dbReference type="GO" id="GO:0016020">
    <property type="term" value="C:membrane"/>
    <property type="evidence" value="ECO:0000250"/>
    <property type="project" value="UniProtKB"/>
</dbReference>
<dbReference type="GO" id="GO:0008422">
    <property type="term" value="F:beta-glucosidase activity"/>
    <property type="evidence" value="ECO:0000250"/>
    <property type="project" value="UniProtKB"/>
</dbReference>
<dbReference type="GO" id="GO:0004336">
    <property type="term" value="F:galactosylceramidase activity"/>
    <property type="evidence" value="ECO:0007669"/>
    <property type="project" value="RHEA"/>
</dbReference>
<dbReference type="GO" id="GO:0004348">
    <property type="term" value="F:glucosylceramidase activity"/>
    <property type="evidence" value="ECO:0000250"/>
    <property type="project" value="UniProtKB"/>
</dbReference>
<dbReference type="GO" id="GO:0046527">
    <property type="term" value="F:glucosyltransferase activity"/>
    <property type="evidence" value="ECO:0000250"/>
    <property type="project" value="UniProtKB"/>
</dbReference>
<dbReference type="GO" id="GO:0050295">
    <property type="term" value="F:steryl-beta-glucosidase activity"/>
    <property type="evidence" value="ECO:0000250"/>
    <property type="project" value="UniProtKB"/>
</dbReference>
<dbReference type="GO" id="GO:0008206">
    <property type="term" value="P:bile acid metabolic process"/>
    <property type="evidence" value="ECO:0000250"/>
    <property type="project" value="UniProtKB"/>
</dbReference>
<dbReference type="GO" id="GO:0005975">
    <property type="term" value="P:carbohydrate metabolic process"/>
    <property type="evidence" value="ECO:0007669"/>
    <property type="project" value="InterPro"/>
</dbReference>
<dbReference type="GO" id="GO:0007417">
    <property type="term" value="P:central nervous system development"/>
    <property type="evidence" value="ECO:0000318"/>
    <property type="project" value="GO_Central"/>
</dbReference>
<dbReference type="GO" id="GO:0021954">
    <property type="term" value="P:central nervous system neuron development"/>
    <property type="evidence" value="ECO:0000250"/>
    <property type="project" value="UniProtKB"/>
</dbReference>
<dbReference type="GO" id="GO:0008203">
    <property type="term" value="P:cholesterol metabolic process"/>
    <property type="evidence" value="ECO:0000250"/>
    <property type="project" value="UniProtKB"/>
</dbReference>
<dbReference type="GO" id="GO:0006680">
    <property type="term" value="P:glucosylceramide catabolic process"/>
    <property type="evidence" value="ECO:0000250"/>
    <property type="project" value="UniProtKB"/>
</dbReference>
<dbReference type="GO" id="GO:0016139">
    <property type="term" value="P:glycoside catabolic process"/>
    <property type="evidence" value="ECO:0000250"/>
    <property type="project" value="UniProtKB"/>
</dbReference>
<dbReference type="GO" id="GO:0030259">
    <property type="term" value="P:lipid glycosylation"/>
    <property type="evidence" value="ECO:0000250"/>
    <property type="project" value="UniProtKB"/>
</dbReference>
<dbReference type="GO" id="GO:0030833">
    <property type="term" value="P:regulation of actin filament polymerization"/>
    <property type="evidence" value="ECO:0000250"/>
    <property type="project" value="UniProtKB"/>
</dbReference>
<dbReference type="GO" id="GO:0097035">
    <property type="term" value="P:regulation of membrane lipid distribution"/>
    <property type="evidence" value="ECO:0000250"/>
    <property type="project" value="UniProtKB"/>
</dbReference>
<dbReference type="GO" id="GO:0031113">
    <property type="term" value="P:regulation of microtubule polymerization"/>
    <property type="evidence" value="ECO:0000250"/>
    <property type="project" value="UniProtKB"/>
</dbReference>
<dbReference type="FunFam" id="1.50.10.10:FF:000013">
    <property type="entry name" value="Non-lysosomal glucosylceramidase"/>
    <property type="match status" value="1"/>
</dbReference>
<dbReference type="Gene3D" id="1.50.10.10">
    <property type="match status" value="1"/>
</dbReference>
<dbReference type="InterPro" id="IPR008928">
    <property type="entry name" value="6-hairpin_glycosidase_sf"/>
</dbReference>
<dbReference type="InterPro" id="IPR012341">
    <property type="entry name" value="6hp_glycosidase-like_sf"/>
</dbReference>
<dbReference type="InterPro" id="IPR014551">
    <property type="entry name" value="B_Glucosidase_GBA2-typ"/>
</dbReference>
<dbReference type="InterPro" id="IPR006775">
    <property type="entry name" value="GH116_catalytic"/>
</dbReference>
<dbReference type="InterPro" id="IPR024462">
    <property type="entry name" value="GH116_N"/>
</dbReference>
<dbReference type="InterPro" id="IPR052566">
    <property type="entry name" value="Non-lysos_glucosylceramidase"/>
</dbReference>
<dbReference type="PANTHER" id="PTHR12654">
    <property type="entry name" value="BILE ACID BETA-GLUCOSIDASE-RELATED"/>
    <property type="match status" value="1"/>
</dbReference>
<dbReference type="PANTHER" id="PTHR12654:SF0">
    <property type="entry name" value="NON-LYSOSOMAL GLUCOSYLCERAMIDASE"/>
    <property type="match status" value="1"/>
</dbReference>
<dbReference type="Pfam" id="PF04685">
    <property type="entry name" value="DUF608"/>
    <property type="match status" value="1"/>
</dbReference>
<dbReference type="Pfam" id="PF12215">
    <property type="entry name" value="Glyco_hydr_116N"/>
    <property type="match status" value="1"/>
</dbReference>
<dbReference type="PIRSF" id="PIRSF028944">
    <property type="entry name" value="Beta_gluc_GBA2"/>
    <property type="match status" value="1"/>
</dbReference>
<dbReference type="SUPFAM" id="SSF48208">
    <property type="entry name" value="Six-hairpin glycosidases"/>
    <property type="match status" value="1"/>
</dbReference>
<feature type="chain" id="PRO_0000283760" description="Non-lysosomal glucosylceramidase">
    <location>
        <begin position="1"/>
        <end position="912"/>
    </location>
</feature>
<feature type="region of interest" description="Disordered" evidence="3">
    <location>
        <begin position="886"/>
        <end position="912"/>
    </location>
</feature>
<feature type="compositionally biased region" description="Polar residues" evidence="3">
    <location>
        <begin position="891"/>
        <end position="902"/>
    </location>
</feature>
<feature type="splice variant" id="VSP_024385" description="In isoform 2." evidence="4">
    <original>FIVCLRRDGRTVYQQ</original>
    <variation>VRKGAGRRRSDSWLA</variation>
    <location>
        <begin position="181"/>
        <end position="195"/>
    </location>
</feature>
<feature type="splice variant" id="VSP_024386" description="In isoform 2." evidence="4">
    <location>
        <begin position="196"/>
        <end position="912"/>
    </location>
</feature>
<evidence type="ECO:0000250" key="1">
    <source>
        <dbReference type="UniProtKB" id="Q69ZF3"/>
    </source>
</evidence>
<evidence type="ECO:0000250" key="2">
    <source>
        <dbReference type="UniProtKB" id="Q9HCG7"/>
    </source>
</evidence>
<evidence type="ECO:0000256" key="3">
    <source>
        <dbReference type="SAM" id="MobiDB-lite"/>
    </source>
</evidence>
<evidence type="ECO:0000303" key="4">
    <source>
    </source>
</evidence>
<evidence type="ECO:0000305" key="5"/>
<evidence type="ECO:0000312" key="6">
    <source>
        <dbReference type="RGD" id="1305598"/>
    </source>
</evidence>
<comment type="function">
    <text evidence="1 2">Non-lysosomal glucosylceramidase that catalyzes the hydrolysis of glucosylceramides/GlcCers (such as beta-D-glucosyl-(1&lt;-&gt;1')-N-acylsphing-4-enine) to free glucose and ceramides (such as N-acylsphing-4-enine) (By similarity). GlcCers are membrane glycosphingolipids that have a wide intracellular distribution (By similarity). They are the main precursors of more complex glycosphingolipids that play a role in cellular growth, differentiation, adhesion, signaling, cytoskeletal dynamics and membrane properties (By similarity). Involved in the transglucosylation of cholesterol, transfers glucose from GlcCer to cholesterol, thereby modifying its water solubility and biological properties (By similarity). Under specific conditions, may catalyze the reverse reaction, transferring glucose from cholesteryl-3-beta-D-glucoside to ceramide (such as N-acylsphing-4-enine). May play a role in the metabolism of bile acids. Able to hydrolyze bile acid 3-O-glucosides as well as to produce bile acid-glucose conjugates thanks to a bile acid glucosyl transferase activity. Catalyzes the hydrolysis of galactosylceramides/GalCers (such as beta-D-galactosyl-(1&lt;-&gt;1')-N-acylsphing-4-enine), as well as the galactosyl transfer between GalCers and cholesterol in vitro with lower activity compared with their activity against GlcCers (By similarity).</text>
</comment>
<comment type="catalytic activity">
    <reaction evidence="2">
        <text>a beta-D-glucosyl-(1&lt;-&gt;1')-N-acylsphing-4-enine + H2O = an N-acylsphing-4-enine + D-glucose</text>
        <dbReference type="Rhea" id="RHEA:13269"/>
        <dbReference type="ChEBI" id="CHEBI:4167"/>
        <dbReference type="ChEBI" id="CHEBI:15377"/>
        <dbReference type="ChEBI" id="CHEBI:22801"/>
        <dbReference type="ChEBI" id="CHEBI:52639"/>
        <dbReference type="EC" id="3.2.1.45"/>
    </reaction>
    <physiologicalReaction direction="left-to-right" evidence="2">
        <dbReference type="Rhea" id="RHEA:13270"/>
    </physiologicalReaction>
</comment>
<comment type="catalytic activity">
    <reaction evidence="2">
        <text>a beta-D-galactosyl-(1&lt;-&gt;1')-N-acylsphing-4-enine + H2O = an N-acylsphing-4-enine + D-galactose</text>
        <dbReference type="Rhea" id="RHEA:14297"/>
        <dbReference type="ChEBI" id="CHEBI:4139"/>
        <dbReference type="ChEBI" id="CHEBI:15377"/>
        <dbReference type="ChEBI" id="CHEBI:18390"/>
        <dbReference type="ChEBI" id="CHEBI:52639"/>
        <dbReference type="EC" id="3.2.1.46"/>
    </reaction>
    <physiologicalReaction direction="left-to-right" evidence="2">
        <dbReference type="Rhea" id="RHEA:14298"/>
    </physiologicalReaction>
</comment>
<comment type="catalytic activity">
    <reaction evidence="2">
        <text>beta-D-glucosyl-(1-&gt;3)-O-lithocholate + H2O = lithocholate + D-glucose</text>
        <dbReference type="Rhea" id="RHEA:58344"/>
        <dbReference type="ChEBI" id="CHEBI:4167"/>
        <dbReference type="ChEBI" id="CHEBI:15377"/>
        <dbReference type="ChEBI" id="CHEBI:29744"/>
        <dbReference type="ChEBI" id="CHEBI:142611"/>
    </reaction>
    <physiologicalReaction direction="left-to-right" evidence="2">
        <dbReference type="Rhea" id="RHEA:58345"/>
    </physiologicalReaction>
</comment>
<comment type="catalytic activity">
    <reaction evidence="2">
        <text>beta-D-glucosyl-(1-&gt;3)-O-chenodeoxycholate + H2O = chenodeoxycholate + D-glucose</text>
        <dbReference type="Rhea" id="RHEA:58340"/>
        <dbReference type="ChEBI" id="CHEBI:4167"/>
        <dbReference type="ChEBI" id="CHEBI:15377"/>
        <dbReference type="ChEBI" id="CHEBI:36234"/>
        <dbReference type="ChEBI" id="CHEBI:142610"/>
    </reaction>
    <physiologicalReaction direction="left-to-right" evidence="2">
        <dbReference type="Rhea" id="RHEA:58341"/>
    </physiologicalReaction>
</comment>
<comment type="catalytic activity">
    <reaction evidence="2">
        <text>a di-trans,poly-cis-dolichyl beta-D-glucosyl phosphate + chenodeoxycholate = beta-D-glucosyl-(1-&gt;3)-O-chenodeoxycholate + a di-trans,poly-cis-dolichyl phosphate + H(+)</text>
        <dbReference type="Rhea" id="RHEA:59104"/>
        <dbReference type="Rhea" id="RHEA-COMP:19498"/>
        <dbReference type="Rhea" id="RHEA-COMP:19502"/>
        <dbReference type="ChEBI" id="CHEBI:15378"/>
        <dbReference type="ChEBI" id="CHEBI:36234"/>
        <dbReference type="ChEBI" id="CHEBI:57525"/>
        <dbReference type="ChEBI" id="CHEBI:57683"/>
        <dbReference type="ChEBI" id="CHEBI:142610"/>
    </reaction>
    <physiologicalReaction direction="left-to-right" evidence="2">
        <dbReference type="Rhea" id="RHEA:59105"/>
    </physiologicalReaction>
</comment>
<comment type="catalytic activity">
    <reaction evidence="2">
        <text>octyl beta-D-glucose + chenodeoxycholate = beta-D-glucosyl-(1-&gt;3)-O-chenodeoxycholate + octan-1-ol</text>
        <dbReference type="Rhea" id="RHEA:59108"/>
        <dbReference type="ChEBI" id="CHEBI:16188"/>
        <dbReference type="ChEBI" id="CHEBI:36234"/>
        <dbReference type="ChEBI" id="CHEBI:41128"/>
        <dbReference type="ChEBI" id="CHEBI:142610"/>
    </reaction>
    <physiologicalReaction direction="left-to-right" evidence="2">
        <dbReference type="Rhea" id="RHEA:59109"/>
    </physiologicalReaction>
</comment>
<comment type="catalytic activity">
    <reaction evidence="1">
        <text>cholesteryl 3-beta-D-glucoside + H2O = cholesterol + D-glucose</text>
        <dbReference type="Rhea" id="RHEA:11956"/>
        <dbReference type="ChEBI" id="CHEBI:4167"/>
        <dbReference type="ChEBI" id="CHEBI:15377"/>
        <dbReference type="ChEBI" id="CHEBI:16113"/>
        <dbReference type="ChEBI" id="CHEBI:17495"/>
    </reaction>
    <physiologicalReaction direction="left-to-right" evidence="2">
        <dbReference type="Rhea" id="RHEA:11957"/>
    </physiologicalReaction>
</comment>
<comment type="catalytic activity">
    <reaction evidence="1">
        <text>a beta-D-glucosyl-(1&lt;-&gt;1')-N-acylsphing-4-enine + cholesterol = cholesteryl 3-beta-D-glucoside + an N-acylsphing-4-enine</text>
        <dbReference type="Rhea" id="RHEA:58264"/>
        <dbReference type="ChEBI" id="CHEBI:16113"/>
        <dbReference type="ChEBI" id="CHEBI:17495"/>
        <dbReference type="ChEBI" id="CHEBI:22801"/>
        <dbReference type="ChEBI" id="CHEBI:52639"/>
    </reaction>
    <physiologicalReaction direction="right-to-left" evidence="1">
        <dbReference type="Rhea" id="RHEA:58266"/>
    </physiologicalReaction>
</comment>
<comment type="catalytic activity">
    <reaction evidence="2">
        <text>beta-D-glucosyl-N-(9Z-octadecenoyl)-sphing-4E-enine + cholesterol = N-(9Z-octadecenoyl)-sphing-4-enine + cholesteryl 3-beta-D-glucoside</text>
        <dbReference type="Rhea" id="RHEA:58324"/>
        <dbReference type="ChEBI" id="CHEBI:16113"/>
        <dbReference type="ChEBI" id="CHEBI:17495"/>
        <dbReference type="ChEBI" id="CHEBI:77996"/>
        <dbReference type="ChEBI" id="CHEBI:139140"/>
    </reaction>
    <physiologicalReaction direction="left-to-right" evidence="2">
        <dbReference type="Rhea" id="RHEA:58325"/>
    </physiologicalReaction>
    <physiologicalReaction direction="right-to-left" evidence="2">
        <dbReference type="Rhea" id="RHEA:58326"/>
    </physiologicalReaction>
</comment>
<comment type="catalytic activity">
    <reaction evidence="2">
        <text>a beta-D-galactosyl-(1&lt;-&gt;1')-N-acylsphing-4-enine + cholesterol = cholesteryl 3-beta-D-galactoside + an N-acylsphing-4-enine</text>
        <dbReference type="Rhea" id="RHEA:70235"/>
        <dbReference type="ChEBI" id="CHEBI:16113"/>
        <dbReference type="ChEBI" id="CHEBI:18390"/>
        <dbReference type="ChEBI" id="CHEBI:52639"/>
        <dbReference type="ChEBI" id="CHEBI:189066"/>
    </reaction>
    <physiologicalReaction direction="left-to-right" evidence="2">
        <dbReference type="Rhea" id="RHEA:70236"/>
    </physiologicalReaction>
    <physiologicalReaction direction="right-to-left" evidence="2">
        <dbReference type="Rhea" id="RHEA:70237"/>
    </physiologicalReaction>
</comment>
<comment type="catalytic activity">
    <reaction evidence="2">
        <text>1-(beta-D-galactosyl)-N-dodecanoylsphing-4-enine + cholesterol = cholesteryl 3-beta-D-galactoside + N-dodecanoylsphing-4-enine</text>
        <dbReference type="Rhea" id="RHEA:70255"/>
        <dbReference type="ChEBI" id="CHEBI:16113"/>
        <dbReference type="ChEBI" id="CHEBI:72956"/>
        <dbReference type="ChEBI" id="CHEBI:73432"/>
        <dbReference type="ChEBI" id="CHEBI:189066"/>
    </reaction>
    <physiologicalReaction direction="left-to-right" evidence="2">
        <dbReference type="Rhea" id="RHEA:70256"/>
    </physiologicalReaction>
    <physiologicalReaction direction="right-to-left" evidence="2">
        <dbReference type="Rhea" id="RHEA:70257"/>
    </physiologicalReaction>
</comment>
<comment type="activity regulation">
    <text evidence="1">Enzymatic activity is dependent on membrane association and requires the presence of lipids.</text>
</comment>
<comment type="pathway">
    <text evidence="1">Lipid metabolism; sphingolipid metabolism.</text>
</comment>
<comment type="pathway">
    <text evidence="1">Steroid metabolism; cholesterol metabolism.</text>
</comment>
<comment type="subcellular location">
    <subcellularLocation>
        <location evidence="1">Endoplasmic reticulum membrane</location>
        <topology evidence="1">Peripheral membrane protein</topology>
        <orientation evidence="1">Cytoplasmic side</orientation>
    </subcellularLocation>
    <subcellularLocation>
        <location evidence="1">Golgi apparatus membrane</location>
        <topology evidence="1">Peripheral membrane protein</topology>
        <orientation evidence="1">Cytoplasmic side</orientation>
    </subcellularLocation>
    <text evidence="2">Localization to the plasma membrane and alternative topologies have also been reported.</text>
</comment>
<comment type="alternative products">
    <event type="alternative splicing"/>
    <isoform>
        <id>Q5M868-1</id>
        <name>1</name>
        <sequence type="displayed"/>
    </isoform>
    <isoform>
        <id>Q5M868-2</id>
        <name>2</name>
        <sequence type="described" ref="VSP_024385 VSP_024386"/>
    </isoform>
</comment>
<comment type="similarity">
    <text evidence="5">Belongs to the non-lysosomal glucosylceramidase family.</text>
</comment>
<proteinExistence type="evidence at transcript level"/>
<reference key="1">
    <citation type="journal article" date="2004" name="Nature">
        <title>Genome sequence of the Brown Norway rat yields insights into mammalian evolution.</title>
        <authorList>
            <person name="Gibbs R.A."/>
            <person name="Weinstock G.M."/>
            <person name="Metzker M.L."/>
            <person name="Muzny D.M."/>
            <person name="Sodergren E.J."/>
            <person name="Scherer S."/>
            <person name="Scott G."/>
            <person name="Steffen D."/>
            <person name="Worley K.C."/>
            <person name="Burch P.E."/>
            <person name="Okwuonu G."/>
            <person name="Hines S."/>
            <person name="Lewis L."/>
            <person name="Deramo C."/>
            <person name="Delgado O."/>
            <person name="Dugan-Rocha S."/>
            <person name="Miner G."/>
            <person name="Morgan M."/>
            <person name="Hawes A."/>
            <person name="Gill R."/>
            <person name="Holt R.A."/>
            <person name="Adams M.D."/>
            <person name="Amanatides P.G."/>
            <person name="Baden-Tillson H."/>
            <person name="Barnstead M."/>
            <person name="Chin S."/>
            <person name="Evans C.A."/>
            <person name="Ferriera S."/>
            <person name="Fosler C."/>
            <person name="Glodek A."/>
            <person name="Gu Z."/>
            <person name="Jennings D."/>
            <person name="Kraft C.L."/>
            <person name="Nguyen T."/>
            <person name="Pfannkoch C.M."/>
            <person name="Sitter C."/>
            <person name="Sutton G.G."/>
            <person name="Venter J.C."/>
            <person name="Woodage T."/>
            <person name="Smith D."/>
            <person name="Lee H.-M."/>
            <person name="Gustafson E."/>
            <person name="Cahill P."/>
            <person name="Kana A."/>
            <person name="Doucette-Stamm L."/>
            <person name="Weinstock K."/>
            <person name="Fechtel K."/>
            <person name="Weiss R.B."/>
            <person name="Dunn D.M."/>
            <person name="Green E.D."/>
            <person name="Blakesley R.W."/>
            <person name="Bouffard G.G."/>
            <person name="De Jong P.J."/>
            <person name="Osoegawa K."/>
            <person name="Zhu B."/>
            <person name="Marra M."/>
            <person name="Schein J."/>
            <person name="Bosdet I."/>
            <person name="Fjell C."/>
            <person name="Jones S."/>
            <person name="Krzywinski M."/>
            <person name="Mathewson C."/>
            <person name="Siddiqui A."/>
            <person name="Wye N."/>
            <person name="McPherson J."/>
            <person name="Zhao S."/>
            <person name="Fraser C.M."/>
            <person name="Shetty J."/>
            <person name="Shatsman S."/>
            <person name="Geer K."/>
            <person name="Chen Y."/>
            <person name="Abramzon S."/>
            <person name="Nierman W.C."/>
            <person name="Havlak P.H."/>
            <person name="Chen R."/>
            <person name="Durbin K.J."/>
            <person name="Egan A."/>
            <person name="Ren Y."/>
            <person name="Song X.-Z."/>
            <person name="Li B."/>
            <person name="Liu Y."/>
            <person name="Qin X."/>
            <person name="Cawley S."/>
            <person name="Cooney A.J."/>
            <person name="D'Souza L.M."/>
            <person name="Martin K."/>
            <person name="Wu J.Q."/>
            <person name="Gonzalez-Garay M.L."/>
            <person name="Jackson A.R."/>
            <person name="Kalafus K.J."/>
            <person name="McLeod M.P."/>
            <person name="Milosavljevic A."/>
            <person name="Virk D."/>
            <person name="Volkov A."/>
            <person name="Wheeler D.A."/>
            <person name="Zhang Z."/>
            <person name="Bailey J.A."/>
            <person name="Eichler E.E."/>
            <person name="Tuzun E."/>
            <person name="Birney E."/>
            <person name="Mongin E."/>
            <person name="Ureta-Vidal A."/>
            <person name="Woodwark C."/>
            <person name="Zdobnov E."/>
            <person name="Bork P."/>
            <person name="Suyama M."/>
            <person name="Torrents D."/>
            <person name="Alexandersson M."/>
            <person name="Trask B.J."/>
            <person name="Young J.M."/>
            <person name="Huang H."/>
            <person name="Wang H."/>
            <person name="Xing H."/>
            <person name="Daniels S."/>
            <person name="Gietzen D."/>
            <person name="Schmidt J."/>
            <person name="Stevens K."/>
            <person name="Vitt U."/>
            <person name="Wingrove J."/>
            <person name="Camara F."/>
            <person name="Mar Alba M."/>
            <person name="Abril J.F."/>
            <person name="Guigo R."/>
            <person name="Smit A."/>
            <person name="Dubchak I."/>
            <person name="Rubin E.M."/>
            <person name="Couronne O."/>
            <person name="Poliakov A."/>
            <person name="Huebner N."/>
            <person name="Ganten D."/>
            <person name="Goesele C."/>
            <person name="Hummel O."/>
            <person name="Kreitler T."/>
            <person name="Lee Y.-A."/>
            <person name="Monti J."/>
            <person name="Schulz H."/>
            <person name="Zimdahl H."/>
            <person name="Himmelbauer H."/>
            <person name="Lehrach H."/>
            <person name="Jacob H.J."/>
            <person name="Bromberg S."/>
            <person name="Gullings-Handley J."/>
            <person name="Jensen-Seaman M.I."/>
            <person name="Kwitek A.E."/>
            <person name="Lazar J."/>
            <person name="Pasko D."/>
            <person name="Tonellato P.J."/>
            <person name="Twigger S."/>
            <person name="Ponting C.P."/>
            <person name="Duarte J.M."/>
            <person name="Rice S."/>
            <person name="Goodstadt L."/>
            <person name="Beatson S.A."/>
            <person name="Emes R.D."/>
            <person name="Winter E.E."/>
            <person name="Webber C."/>
            <person name="Brandt P."/>
            <person name="Nyakatura G."/>
            <person name="Adetobi M."/>
            <person name="Chiaromonte F."/>
            <person name="Elnitski L."/>
            <person name="Eswara P."/>
            <person name="Hardison R.C."/>
            <person name="Hou M."/>
            <person name="Kolbe D."/>
            <person name="Makova K."/>
            <person name="Miller W."/>
            <person name="Nekrutenko A."/>
            <person name="Riemer C."/>
            <person name="Schwartz S."/>
            <person name="Taylor J."/>
            <person name="Yang S."/>
            <person name="Zhang Y."/>
            <person name="Lindpaintner K."/>
            <person name="Andrews T.D."/>
            <person name="Caccamo M."/>
            <person name="Clamp M."/>
            <person name="Clarke L."/>
            <person name="Curwen V."/>
            <person name="Durbin R.M."/>
            <person name="Eyras E."/>
            <person name="Searle S.M."/>
            <person name="Cooper G.M."/>
            <person name="Batzoglou S."/>
            <person name="Brudno M."/>
            <person name="Sidow A."/>
            <person name="Stone E.A."/>
            <person name="Payseur B.A."/>
            <person name="Bourque G."/>
            <person name="Lopez-Otin C."/>
            <person name="Puente X.S."/>
            <person name="Chakrabarti K."/>
            <person name="Chatterji S."/>
            <person name="Dewey C."/>
            <person name="Pachter L."/>
            <person name="Bray N."/>
            <person name="Yap V.B."/>
            <person name="Caspi A."/>
            <person name="Tesler G."/>
            <person name="Pevzner P.A."/>
            <person name="Haussler D."/>
            <person name="Roskin K.M."/>
            <person name="Baertsch R."/>
            <person name="Clawson H."/>
            <person name="Furey T.S."/>
            <person name="Hinrichs A.S."/>
            <person name="Karolchik D."/>
            <person name="Kent W.J."/>
            <person name="Rosenbloom K.R."/>
            <person name="Trumbower H."/>
            <person name="Weirauch M."/>
            <person name="Cooper D.N."/>
            <person name="Stenson P.D."/>
            <person name="Ma B."/>
            <person name="Brent M."/>
            <person name="Arumugam M."/>
            <person name="Shteynberg D."/>
            <person name="Copley R.R."/>
            <person name="Taylor M.S."/>
            <person name="Riethman H."/>
            <person name="Mudunuri U."/>
            <person name="Peterson J."/>
            <person name="Guyer M."/>
            <person name="Felsenfeld A."/>
            <person name="Old S."/>
            <person name="Mockrin S."/>
            <person name="Collins F.S."/>
        </authorList>
    </citation>
    <scope>NUCLEOTIDE SEQUENCE [LARGE SCALE GENOMIC DNA]</scope>
    <source>
        <strain>Brown Norway</strain>
    </source>
</reference>
<reference key="2">
    <citation type="journal article" date="2004" name="Genome Res.">
        <title>The status, quality, and expansion of the NIH full-length cDNA project: the Mammalian Gene Collection (MGC).</title>
        <authorList>
            <consortium name="The MGC Project Team"/>
        </authorList>
    </citation>
    <scope>NUCLEOTIDE SEQUENCE [LARGE SCALE MRNA] (ISOFORM 2)</scope>
    <source>
        <tissue>Spleen</tissue>
    </source>
</reference>
<organism>
    <name type="scientific">Rattus norvegicus</name>
    <name type="common">Rat</name>
    <dbReference type="NCBI Taxonomy" id="10116"/>
    <lineage>
        <taxon>Eukaryota</taxon>
        <taxon>Metazoa</taxon>
        <taxon>Chordata</taxon>
        <taxon>Craniata</taxon>
        <taxon>Vertebrata</taxon>
        <taxon>Euteleostomi</taxon>
        <taxon>Mammalia</taxon>
        <taxon>Eutheria</taxon>
        <taxon>Euarchontoglires</taxon>
        <taxon>Glires</taxon>
        <taxon>Rodentia</taxon>
        <taxon>Myomorpha</taxon>
        <taxon>Muroidea</taxon>
        <taxon>Muridae</taxon>
        <taxon>Murinae</taxon>
        <taxon>Rattus</taxon>
    </lineage>
</organism>